<dbReference type="EC" id="3.1.3.95" evidence="8"/>
<dbReference type="EMBL" id="BX284601">
    <property type="protein sequence ID" value="CCD66194.1"/>
    <property type="molecule type" value="Genomic_DNA"/>
</dbReference>
<dbReference type="RefSeq" id="NP_491531.2">
    <property type="nucleotide sequence ID" value="NM_059130.4"/>
</dbReference>
<dbReference type="SMR" id="Q9N589"/>
<dbReference type="FunCoup" id="Q9N589">
    <property type="interactions" value="2017"/>
</dbReference>
<dbReference type="STRING" id="6239.Y110A7A.5.1"/>
<dbReference type="PaxDb" id="6239-Y110A7A.5"/>
<dbReference type="PeptideAtlas" id="Q9N589"/>
<dbReference type="EnsemblMetazoa" id="Y110A7A.5.1">
    <property type="protein sequence ID" value="Y110A7A.5.1"/>
    <property type="gene ID" value="WBGene00003475"/>
</dbReference>
<dbReference type="GeneID" id="172148"/>
<dbReference type="KEGG" id="cel:CELE_Y110A7A.5"/>
<dbReference type="UCSC" id="Y110A7A.5">
    <property type="organism name" value="c. elegans"/>
</dbReference>
<dbReference type="AGR" id="WB:WBGene00003475"/>
<dbReference type="CTD" id="172148"/>
<dbReference type="WormBase" id="Y110A7A.5">
    <property type="protein sequence ID" value="CE30707"/>
    <property type="gene ID" value="WBGene00003475"/>
    <property type="gene designation" value="mtm-1"/>
</dbReference>
<dbReference type="eggNOG" id="KOG4471">
    <property type="taxonomic scope" value="Eukaryota"/>
</dbReference>
<dbReference type="GeneTree" id="ENSGT00940000167774"/>
<dbReference type="HOGENOM" id="CLU_001839_4_1_1"/>
<dbReference type="InParanoid" id="Q9N589"/>
<dbReference type="OMA" id="YYARSNP"/>
<dbReference type="OrthoDB" id="271628at2759"/>
<dbReference type="PhylomeDB" id="Q9N589"/>
<dbReference type="Reactome" id="R-CEL-1483248">
    <property type="pathway name" value="Synthesis of PIPs at the ER membrane"/>
</dbReference>
<dbReference type="Reactome" id="R-CEL-1660499">
    <property type="pathway name" value="Synthesis of PIPs at the plasma membrane"/>
</dbReference>
<dbReference type="Reactome" id="R-CEL-1660516">
    <property type="pathway name" value="Synthesis of PIPs at the early endosome membrane"/>
</dbReference>
<dbReference type="Reactome" id="R-CEL-1660517">
    <property type="pathway name" value="Synthesis of PIPs at the late endosome membrane"/>
</dbReference>
<dbReference type="Reactome" id="R-CEL-9035034">
    <property type="pathway name" value="RHOF GTPase cycle"/>
</dbReference>
<dbReference type="PRO" id="PR:Q9N589"/>
<dbReference type="Proteomes" id="UP000001940">
    <property type="component" value="Chromosome I"/>
</dbReference>
<dbReference type="Bgee" id="WBGene00003475">
    <property type="expression patterns" value="Expressed in germ line (C elegans) and 4 other cell types or tissues"/>
</dbReference>
<dbReference type="GO" id="GO:0045179">
    <property type="term" value="C:apical cortex"/>
    <property type="evidence" value="ECO:0000314"/>
    <property type="project" value="WormBase"/>
</dbReference>
<dbReference type="GO" id="GO:0016324">
    <property type="term" value="C:apical plasma membrane"/>
    <property type="evidence" value="ECO:0007669"/>
    <property type="project" value="UniProtKB-SubCell"/>
</dbReference>
<dbReference type="GO" id="GO:0005938">
    <property type="term" value="C:cell cortex"/>
    <property type="evidence" value="ECO:0000314"/>
    <property type="project" value="WormBase"/>
</dbReference>
<dbReference type="GO" id="GO:0042995">
    <property type="term" value="C:cell projection"/>
    <property type="evidence" value="ECO:0007669"/>
    <property type="project" value="UniProtKB-KW"/>
</dbReference>
<dbReference type="GO" id="GO:0005737">
    <property type="term" value="C:cytoplasm"/>
    <property type="evidence" value="ECO:0000318"/>
    <property type="project" value="GO_Central"/>
</dbReference>
<dbReference type="GO" id="GO:0005829">
    <property type="term" value="C:cytosol"/>
    <property type="evidence" value="ECO:0000314"/>
    <property type="project" value="WormBase"/>
</dbReference>
<dbReference type="GO" id="GO:0016020">
    <property type="term" value="C:membrane"/>
    <property type="evidence" value="ECO:0000318"/>
    <property type="project" value="GO_Central"/>
</dbReference>
<dbReference type="GO" id="GO:0001891">
    <property type="term" value="C:phagocytic cup"/>
    <property type="evidence" value="ECO:0007669"/>
    <property type="project" value="UniProtKB-SubCell"/>
</dbReference>
<dbReference type="GO" id="GO:0005886">
    <property type="term" value="C:plasma membrane"/>
    <property type="evidence" value="ECO:0000314"/>
    <property type="project" value="WormBase"/>
</dbReference>
<dbReference type="GO" id="GO:0052629">
    <property type="term" value="F:phosphatidylinositol-3,5-bisphosphate 3-phosphatase activity"/>
    <property type="evidence" value="ECO:0000314"/>
    <property type="project" value="WormBase"/>
</dbReference>
<dbReference type="GO" id="GO:0004438">
    <property type="term" value="F:phosphatidylinositol-3-phosphate phosphatase activity"/>
    <property type="evidence" value="ECO:0000314"/>
    <property type="project" value="WormBase"/>
</dbReference>
<dbReference type="GO" id="GO:0005546">
    <property type="term" value="F:phosphatidylinositol-4,5-bisphosphate binding"/>
    <property type="evidence" value="ECO:0000314"/>
    <property type="project" value="WormBase"/>
</dbReference>
<dbReference type="GO" id="GO:0045806">
    <property type="term" value="P:negative regulation of endocytosis"/>
    <property type="evidence" value="ECO:0000316"/>
    <property type="project" value="WormBase"/>
</dbReference>
<dbReference type="GO" id="GO:1901075">
    <property type="term" value="P:negative regulation of engulfment of apoptotic cell"/>
    <property type="evidence" value="ECO:0000316"/>
    <property type="project" value="WormBase"/>
</dbReference>
<dbReference type="GO" id="GO:0006909">
    <property type="term" value="P:phagocytosis"/>
    <property type="evidence" value="ECO:0007669"/>
    <property type="project" value="UniProtKB-KW"/>
</dbReference>
<dbReference type="GO" id="GO:0046856">
    <property type="term" value="P:phosphatidylinositol dephosphorylation"/>
    <property type="evidence" value="ECO:0000318"/>
    <property type="project" value="GO_Central"/>
</dbReference>
<dbReference type="GO" id="GO:0046839">
    <property type="term" value="P:phospholipid dephosphorylation"/>
    <property type="evidence" value="ECO:0000314"/>
    <property type="project" value="WormBase"/>
</dbReference>
<dbReference type="CDD" id="cd13223">
    <property type="entry name" value="PH-GRAM_MTM-like"/>
    <property type="match status" value="1"/>
</dbReference>
<dbReference type="Gene3D" id="2.30.29.30">
    <property type="entry name" value="Pleckstrin-homology domain (PH domain)/Phosphotyrosine-binding domain (PTB)"/>
    <property type="match status" value="1"/>
</dbReference>
<dbReference type="InterPro" id="IPR004182">
    <property type="entry name" value="GRAM"/>
</dbReference>
<dbReference type="InterPro" id="IPR030564">
    <property type="entry name" value="Myotubularin"/>
</dbReference>
<dbReference type="InterPro" id="IPR010569">
    <property type="entry name" value="Myotubularin-like_Pase_dom"/>
</dbReference>
<dbReference type="InterPro" id="IPR011993">
    <property type="entry name" value="PH-like_dom_sf"/>
</dbReference>
<dbReference type="InterPro" id="IPR029021">
    <property type="entry name" value="Prot-tyrosine_phosphatase-like"/>
</dbReference>
<dbReference type="InterPro" id="IPR016130">
    <property type="entry name" value="Tyr_Pase_AS"/>
</dbReference>
<dbReference type="InterPro" id="IPR003595">
    <property type="entry name" value="Tyr_Pase_cat"/>
</dbReference>
<dbReference type="PANTHER" id="PTHR10807">
    <property type="entry name" value="MYOTUBULARIN-RELATED"/>
    <property type="match status" value="1"/>
</dbReference>
<dbReference type="PANTHER" id="PTHR10807:SF128">
    <property type="entry name" value="PHOSPHATIDYLINOSITOL-3,5-BISPHOSPHATE 3-PHOSPHATASE"/>
    <property type="match status" value="1"/>
</dbReference>
<dbReference type="Pfam" id="PF06602">
    <property type="entry name" value="Myotub-related"/>
    <property type="match status" value="1"/>
</dbReference>
<dbReference type="SMART" id="SM00568">
    <property type="entry name" value="GRAM"/>
    <property type="match status" value="1"/>
</dbReference>
<dbReference type="SMART" id="SM00404">
    <property type="entry name" value="PTPc_motif"/>
    <property type="match status" value="1"/>
</dbReference>
<dbReference type="SUPFAM" id="SSF52799">
    <property type="entry name" value="(Phosphotyrosine protein) phosphatases II"/>
    <property type="match status" value="1"/>
</dbReference>
<dbReference type="SUPFAM" id="SSF50729">
    <property type="entry name" value="PH domain-like"/>
    <property type="match status" value="1"/>
</dbReference>
<dbReference type="PROSITE" id="PS51339">
    <property type="entry name" value="PPASE_MYOTUBULARIN"/>
    <property type="match status" value="1"/>
</dbReference>
<dbReference type="PROSITE" id="PS00383">
    <property type="entry name" value="TYR_PHOSPHATASE_1"/>
    <property type="match status" value="1"/>
</dbReference>
<keyword id="KW-1003">Cell membrane</keyword>
<keyword id="KW-0966">Cell projection</keyword>
<keyword id="KW-0175">Coiled coil</keyword>
<keyword id="KW-0378">Hydrolase</keyword>
<keyword id="KW-0443">Lipid metabolism</keyword>
<keyword id="KW-0472">Membrane</keyword>
<keyword id="KW-0581">Phagocytosis</keyword>
<keyword id="KW-1185">Reference proteome</keyword>
<name>MTMR1_CAEEL</name>
<accession>Q9N589</accession>
<sequence length="588" mass="67593">MDDRGNNSGEVGEFASSSMIQESIDLKLLAAESLIWTEKNVTYFGPLGKFPGKIVITRYRMVFLVGDGGKMYEQWKLDIPLGQVSRIEKVGRKTTSVAKRGDDNYGFTIYCKDYRVYRFTCNPASSDRKNVCDSLNRYAFPLSHNLPMFASVHAAETPRLMKDGWKIYSAEKEYERLGIPNSRLWKEVDINKDYKFSETYPRTFVIPTVSWEEGKPFVKKLGEFRSKERIPVLSWINQTTLASISRCSQPMTGISGKRSAEDERHLTNIMNANANCRELLILDARPAVNAKLNKAKGGGYEENYVNAPLTFLNIHNIHVVRDSLKRLLAALIPRVDEKGYYKALDESKWLNHVQSILEGAVKAVFNVDTEKQSVLIHCSDGWDRTAQLTSLAMIQLDSYYRTIEGFIVLIEKEWCSFGHKFGERIGHGDDNYSDGERSPVFVQFCDCLWQIMRQFPWAFEFTQELLICMLDELYACRYGTFLYNSEKIRLKDKKCDETTISFWSYVLENKKKFRNPMFKHGKSNKVINVNPSLCGLHVWIDYYARSNPYVVTPNHEDVQQPGAQFVDEKKQLLDEIMALDDAAQKLTA</sequence>
<gene>
    <name evidence="12" type="primary">mtm-1</name>
    <name evidence="12" type="ORF">Y110A7A.5</name>
</gene>
<proteinExistence type="evidence at protein level"/>
<reference evidence="11" key="1">
    <citation type="journal article" date="1998" name="Science">
        <title>Genome sequence of the nematode C. elegans: a platform for investigating biology.</title>
        <authorList>
            <consortium name="The C. elegans sequencing consortium"/>
        </authorList>
    </citation>
    <scope>NUCLEOTIDE SEQUENCE [LARGE SCALE GENOMIC DNA]</scope>
    <source>
        <strain evidence="11">Bristol N2</strain>
    </source>
</reference>
<reference evidence="10" key="2">
    <citation type="journal article" date="2003" name="J. Biol. Chem.">
        <title>Genetic analysis of the myotubularin family of phosphatases in Caenorhabditis elegans.</title>
        <authorList>
            <person name="Xue Y."/>
            <person name="Fares H."/>
            <person name="Grant B."/>
            <person name="Li Z."/>
            <person name="Rose A.M."/>
            <person name="Clark S.G."/>
            <person name="Skolnik E.Y."/>
        </authorList>
    </citation>
    <scope>TISSUE SPECIFICITY</scope>
</reference>
<reference evidence="10" key="3">
    <citation type="journal article" date="2009" name="PLoS Genet.">
        <title>Caenorhabditis elegans myotubularin MTM-1 negatively regulates the engulfment of apoptotic cells.</title>
        <authorList>
            <person name="Zou W."/>
            <person name="Lu Q."/>
            <person name="Zhao D."/>
            <person name="Li W."/>
            <person name="Mapes J."/>
            <person name="Xie Y."/>
            <person name="Wang X."/>
        </authorList>
    </citation>
    <scope>FUNCTION</scope>
    <scope>SUBCELLULAR LOCATION</scope>
    <scope>TISSUE SPECIFICITY</scope>
    <scope>DOMAIN</scope>
    <scope>DISRUPTION PHENOTYPE</scope>
</reference>
<reference evidence="10" key="4">
    <citation type="journal article" date="2011" name="Development">
        <title>The phosphoinositide phosphatase MTM-1 regulates apoptotic cell corpse clearance through CED-5-CED-12 in C. elegans.</title>
        <authorList>
            <person name="Neukomm L.J."/>
            <person name="Nicot A.S."/>
            <person name="Kinchen J.M."/>
            <person name="Almendinger J."/>
            <person name="Pinto S.M."/>
            <person name="Zeng S."/>
            <person name="Doukoumetzidis K."/>
            <person name="Tronchere H."/>
            <person name="Payrastre B."/>
            <person name="Laporte J.F."/>
            <person name="Hengartner M.O."/>
        </authorList>
    </citation>
    <scope>FUNCTION</scope>
    <scope>CATALYTIC ACTIVITY</scope>
    <scope>SUBCELLULAR LOCATION</scope>
    <scope>TISSUE SPECIFICITY</scope>
    <scope>DISRUPTION PHENOTYPE</scope>
    <scope>MUTAGENESIS OF GLY-106</scope>
</reference>
<comment type="function">
    <text evidence="7 8">Lipid phosphatase that specifically dephosphorylates phosphatidylinositol 3-phosphate (PI3P) and phosphatidylinositol 3,5-bisphosphate (PI(3,5)P2). Negatively regulates accumulation of PI3P on intracellular vesicles (PubMed:19816564, PubMed:21490059). Negatively regulates phagocytosis of apoptotic cells probably by limiting the recruitment and/or the activation of ced-5, ced-2 and ced-12 complex (PubMed:19816564, PubMed:21490059). In addition, may positively regulate phagosome maturation by promoting recycling of apoptotic receptor ced-1 back to the plasma membrane (PubMed:21490059). Essential for embryonic and larval development (PubMed:19816564). May promote migration of distal tip cells (PubMed:19816564).</text>
</comment>
<comment type="catalytic activity">
    <reaction evidence="8">
        <text>a 1,2-diacyl-sn-glycero-3-phospho-(1D-myo-inositol-3,5-bisphosphate) + H2O = a 1,2-diacyl-sn-glycero-3-phospho-(1D-myo-inositol-5-phosphate) + phosphate</text>
        <dbReference type="Rhea" id="RHEA:39019"/>
        <dbReference type="ChEBI" id="CHEBI:15377"/>
        <dbReference type="ChEBI" id="CHEBI:43474"/>
        <dbReference type="ChEBI" id="CHEBI:57795"/>
        <dbReference type="ChEBI" id="CHEBI:57923"/>
        <dbReference type="EC" id="3.1.3.95"/>
    </reaction>
</comment>
<comment type="catalytic activity">
    <reaction evidence="8">
        <text>a 1,2-diacyl-sn-glycero-3-phospho-(1D-myo-inositol-3-phosphate) + H2O = a 1,2-diacyl-sn-glycero-3-phospho-(1D-myo-inositol) + phosphate</text>
        <dbReference type="Rhea" id="RHEA:12316"/>
        <dbReference type="ChEBI" id="CHEBI:15377"/>
        <dbReference type="ChEBI" id="CHEBI:43474"/>
        <dbReference type="ChEBI" id="CHEBI:57880"/>
        <dbReference type="ChEBI" id="CHEBI:58088"/>
    </reaction>
</comment>
<comment type="catalytic activity">
    <reaction evidence="1">
        <text>1,2-dioctanoyl-sn-glycero-3-phospho-(1-D-myo-inositol-3-phosphate) + H2O = 1,2-dioctanoyl-sn-glycero-3-phospho-(1D-myo-inositol) + phosphate</text>
        <dbReference type="Rhea" id="RHEA:42328"/>
        <dbReference type="ChEBI" id="CHEBI:15377"/>
        <dbReference type="ChEBI" id="CHEBI:43474"/>
        <dbReference type="ChEBI" id="CHEBI:65221"/>
        <dbReference type="ChEBI" id="CHEBI:78934"/>
    </reaction>
</comment>
<comment type="subcellular location">
    <subcellularLocation>
        <location evidence="7">Cell membrane</location>
        <topology evidence="7">Peripheral membrane protein</topology>
    </subcellularLocation>
    <subcellularLocation>
        <location evidence="7">Cell projection</location>
        <location evidence="7">Phagocytic cup</location>
    </subcellularLocation>
    <subcellularLocation>
        <location evidence="8">Apical cell membrane</location>
        <topology evidence="8">Peripheral membrane protein</topology>
    </subcellularLocation>
    <subcellularLocation>
        <location evidence="8">Cytoplasmic granule membrane</location>
    </subcellularLocation>
    <text evidence="7">Transiently co-localizes with phagocytic receptor ced-1 at the pseudopods during phagocytosis of apoptotic cells.</text>
</comment>
<comment type="tissue specificity">
    <text evidence="6 7 8">Expressed in embryo, larva and in adults (PubMed:19816564, PubMed:21490059). Expressed in a few head and tail neurons (PubMed:12788949). Expressed in hypodermis, body wall and pharyngeal muscles, sheath cells, vulva, distal tip cells and coelomocytes (PubMed:19816564, PubMed:21490059).</text>
</comment>
<comment type="domain">
    <text evidence="7">The GRAM domain is required for localization to the plasma membrane.</text>
</comment>
<comment type="domain">
    <text evidence="7">The myotubularin phosphatase domain is required for localization to the plasma membrane.</text>
</comment>
<comment type="disruption phenotype">
    <text evidence="7 8">RNAi-mediated knockdown causes an increase in PI3P levels in intracellular vesicles. Also causes an increase in germline cell corpse engulfment, although corpses fail to be cleared. RNAi-mediated knockdown in ced-1, ced-6, ced-2, ced-10 or ced-7 mutant background partially restores cell corpses engulfment.</text>
</comment>
<comment type="similarity">
    <text evidence="10">Belongs to the protein-tyrosine phosphatase family. Non-receptor class myotubularin subfamily.</text>
</comment>
<organism evidence="11">
    <name type="scientific">Caenorhabditis elegans</name>
    <dbReference type="NCBI Taxonomy" id="6239"/>
    <lineage>
        <taxon>Eukaryota</taxon>
        <taxon>Metazoa</taxon>
        <taxon>Ecdysozoa</taxon>
        <taxon>Nematoda</taxon>
        <taxon>Chromadorea</taxon>
        <taxon>Rhabditida</taxon>
        <taxon>Rhabditina</taxon>
        <taxon>Rhabditomorpha</taxon>
        <taxon>Rhabditoidea</taxon>
        <taxon>Rhabditidae</taxon>
        <taxon>Peloderinae</taxon>
        <taxon>Caenorhabditis</taxon>
    </lineage>
</organism>
<evidence type="ECO:0000250" key="1">
    <source>
        <dbReference type="UniProtKB" id="Q13613"/>
    </source>
</evidence>
<evidence type="ECO:0000250" key="2">
    <source>
        <dbReference type="UniProtKB" id="Q13614"/>
    </source>
</evidence>
<evidence type="ECO:0000255" key="3"/>
<evidence type="ECO:0000255" key="4">
    <source>
        <dbReference type="PROSITE-ProRule" id="PRU00669"/>
    </source>
</evidence>
<evidence type="ECO:0000255" key="5">
    <source>
        <dbReference type="PROSITE-ProRule" id="PRU10044"/>
    </source>
</evidence>
<evidence type="ECO:0000269" key="6">
    <source>
    </source>
</evidence>
<evidence type="ECO:0000269" key="7">
    <source>
    </source>
</evidence>
<evidence type="ECO:0000269" key="8">
    <source>
    </source>
</evidence>
<evidence type="ECO:0000303" key="9">
    <source>
    </source>
</evidence>
<evidence type="ECO:0000305" key="10"/>
<evidence type="ECO:0000312" key="11">
    <source>
        <dbReference type="Proteomes" id="UP000001940"/>
    </source>
</evidence>
<evidence type="ECO:0000312" key="12">
    <source>
        <dbReference type="WormBase" id="Y110A7A.5"/>
    </source>
</evidence>
<feature type="chain" id="PRO_0000436175" description="Phosphatidylinositol-3,5-bisphosphate 3-phosphatase mtm-1" evidence="10">
    <location>
        <begin position="1"/>
        <end position="588"/>
    </location>
</feature>
<feature type="domain" description="GRAM" evidence="3">
    <location>
        <begin position="20"/>
        <end position="91"/>
    </location>
</feature>
<feature type="domain" description="Myotubularin phosphatase" evidence="4">
    <location>
        <begin position="164"/>
        <end position="543"/>
    </location>
</feature>
<feature type="coiled-coil region" evidence="3">
    <location>
        <begin position="563"/>
        <end position="588"/>
    </location>
</feature>
<feature type="active site" description="Phosphocysteine intermediate" evidence="2 5">
    <location>
        <position position="378"/>
    </location>
</feature>
<feature type="binding site" evidence="2">
    <location>
        <position position="293"/>
    </location>
    <ligand>
        <name>a 1,2-diacyl-sn-glycero-3-phospho-(1D-myo-inositol-3,5-bisphosphate)</name>
        <dbReference type="ChEBI" id="CHEBI:57923"/>
    </ligand>
</feature>
<feature type="binding site" evidence="2">
    <location>
        <position position="293"/>
    </location>
    <ligand>
        <name>a 1,2-diacyl-sn-glycero-3-phospho-(1D-myo-inositol-3-phosphate)</name>
        <dbReference type="ChEBI" id="CHEBI:58088"/>
    </ligand>
</feature>
<feature type="binding site" evidence="2">
    <location>
        <position position="316"/>
    </location>
    <ligand>
        <name>a 1,2-diacyl-sn-glycero-3-phospho-(1D-myo-inositol-3,5-bisphosphate)</name>
        <dbReference type="ChEBI" id="CHEBI:57923"/>
    </ligand>
</feature>
<feature type="binding site" evidence="2">
    <location>
        <position position="316"/>
    </location>
    <ligand>
        <name>a 1,2-diacyl-sn-glycero-3-phospho-(1D-myo-inositol-3-phosphate)</name>
        <dbReference type="ChEBI" id="CHEBI:58088"/>
    </ligand>
</feature>
<feature type="binding site" evidence="2">
    <location>
        <position position="317"/>
    </location>
    <ligand>
        <name>a 1,2-diacyl-sn-glycero-3-phospho-(1D-myo-inositol-3,5-bisphosphate)</name>
        <dbReference type="ChEBI" id="CHEBI:57923"/>
    </ligand>
</feature>
<feature type="binding site" evidence="2">
    <location>
        <position position="317"/>
    </location>
    <ligand>
        <name>a 1,2-diacyl-sn-glycero-3-phospho-(1D-myo-inositol-3-phosphate)</name>
        <dbReference type="ChEBI" id="CHEBI:58088"/>
    </ligand>
</feature>
<feature type="binding site" evidence="2">
    <location>
        <position position="379"/>
    </location>
    <ligand>
        <name>a 1,2-diacyl-sn-glycero-3-phospho-(1D-myo-inositol-3,5-bisphosphate)</name>
        <dbReference type="ChEBI" id="CHEBI:57923"/>
    </ligand>
</feature>
<feature type="binding site" evidence="2">
    <location>
        <position position="379"/>
    </location>
    <ligand>
        <name>a 1,2-diacyl-sn-glycero-3-phospho-(1D-myo-inositol-3-phosphate)</name>
        <dbReference type="ChEBI" id="CHEBI:58088"/>
    </ligand>
</feature>
<feature type="binding site" evidence="1">
    <location>
        <position position="379"/>
    </location>
    <ligand>
        <name>phosphate</name>
        <dbReference type="ChEBI" id="CHEBI:43474"/>
    </ligand>
</feature>
<feature type="binding site" evidence="2">
    <location>
        <position position="380"/>
    </location>
    <ligand>
        <name>a 1,2-diacyl-sn-glycero-3-phospho-(1D-myo-inositol-3,5-bisphosphate)</name>
        <dbReference type="ChEBI" id="CHEBI:57923"/>
    </ligand>
</feature>
<feature type="binding site" evidence="2">
    <location>
        <position position="380"/>
    </location>
    <ligand>
        <name>a 1,2-diacyl-sn-glycero-3-phospho-(1D-myo-inositol-3-phosphate)</name>
        <dbReference type="ChEBI" id="CHEBI:58088"/>
    </ligand>
</feature>
<feature type="binding site" evidence="2">
    <location>
        <position position="381"/>
    </location>
    <ligand>
        <name>a 1,2-diacyl-sn-glycero-3-phospho-(1D-myo-inositol-3,5-bisphosphate)</name>
        <dbReference type="ChEBI" id="CHEBI:57923"/>
    </ligand>
</feature>
<feature type="binding site" evidence="2">
    <location>
        <position position="381"/>
    </location>
    <ligand>
        <name>a 1,2-diacyl-sn-glycero-3-phospho-(1D-myo-inositol-3-phosphate)</name>
        <dbReference type="ChEBI" id="CHEBI:58088"/>
    </ligand>
</feature>
<feature type="binding site" evidence="1">
    <location>
        <position position="381"/>
    </location>
    <ligand>
        <name>phosphate</name>
        <dbReference type="ChEBI" id="CHEBI:43474"/>
    </ligand>
</feature>
<feature type="binding site" evidence="2">
    <location>
        <position position="382"/>
    </location>
    <ligand>
        <name>a 1,2-diacyl-sn-glycero-3-phospho-(1D-myo-inositol-3,5-bisphosphate)</name>
        <dbReference type="ChEBI" id="CHEBI:57923"/>
    </ligand>
</feature>
<feature type="binding site" evidence="2">
    <location>
        <position position="382"/>
    </location>
    <ligand>
        <name>a 1,2-diacyl-sn-glycero-3-phospho-(1D-myo-inositol-3-phosphate)</name>
        <dbReference type="ChEBI" id="CHEBI:58088"/>
    </ligand>
</feature>
<feature type="binding site" evidence="1">
    <location>
        <position position="382"/>
    </location>
    <ligand>
        <name>phosphate</name>
        <dbReference type="ChEBI" id="CHEBI:43474"/>
    </ligand>
</feature>
<feature type="binding site" evidence="2">
    <location>
        <position position="383"/>
    </location>
    <ligand>
        <name>a 1,2-diacyl-sn-glycero-3-phospho-(1D-myo-inositol-3,5-bisphosphate)</name>
        <dbReference type="ChEBI" id="CHEBI:57923"/>
    </ligand>
</feature>
<feature type="binding site" evidence="2">
    <location>
        <position position="383"/>
    </location>
    <ligand>
        <name>a 1,2-diacyl-sn-glycero-3-phospho-(1D-myo-inositol-3-phosphate)</name>
        <dbReference type="ChEBI" id="CHEBI:58088"/>
    </ligand>
</feature>
<feature type="binding site" evidence="1">
    <location>
        <position position="383"/>
    </location>
    <ligand>
        <name>phosphate</name>
        <dbReference type="ChEBI" id="CHEBI:43474"/>
    </ligand>
</feature>
<feature type="binding site" evidence="2">
    <location>
        <position position="384"/>
    </location>
    <ligand>
        <name>a 1,2-diacyl-sn-glycero-3-phospho-(1D-myo-inositol-3,5-bisphosphate)</name>
        <dbReference type="ChEBI" id="CHEBI:57923"/>
    </ligand>
</feature>
<feature type="binding site" evidence="2">
    <location>
        <position position="384"/>
    </location>
    <ligand>
        <name>a 1,2-diacyl-sn-glycero-3-phospho-(1D-myo-inositol-3-phosphate)</name>
        <dbReference type="ChEBI" id="CHEBI:58088"/>
    </ligand>
</feature>
<feature type="binding site" evidence="1">
    <location>
        <position position="384"/>
    </location>
    <ligand>
        <name>phosphate</name>
        <dbReference type="ChEBI" id="CHEBI:43474"/>
    </ligand>
</feature>
<feature type="binding site" evidence="2">
    <location>
        <position position="420"/>
    </location>
    <ligand>
        <name>a 1,2-diacyl-sn-glycero-3-phospho-(1D-myo-inositol-3,5-bisphosphate)</name>
        <dbReference type="ChEBI" id="CHEBI:57923"/>
    </ligand>
</feature>
<feature type="binding site" evidence="2">
    <location>
        <position position="424"/>
    </location>
    <ligand>
        <name>a 1,2-diacyl-sn-glycero-3-phospho-(1D-myo-inositol-3,5-bisphosphate)</name>
        <dbReference type="ChEBI" id="CHEBI:57923"/>
    </ligand>
</feature>
<feature type="binding site" evidence="2">
    <location>
        <position position="424"/>
    </location>
    <ligand>
        <name>a 1,2-diacyl-sn-glycero-3-phospho-(1D-myo-inositol-3-phosphate)</name>
        <dbReference type="ChEBI" id="CHEBI:58088"/>
    </ligand>
</feature>
<feature type="mutagenesis site" description="In op309; severe reduction in PI3P and PI(3,5)P2 dephosphorylation. Increased levels of PI3P in intracellular vesicles. Restores the engulfment of cell corpses in a ced-6 n1813 mutant background." evidence="8">
    <original>G</original>
    <variation>E</variation>
    <location>
        <position position="106"/>
    </location>
</feature>
<protein>
    <recommendedName>
        <fullName evidence="9">Phosphatidylinositol-3,5-bisphosphate 3-phosphatase mtm-1</fullName>
        <ecNumber evidence="8">3.1.3.95</ecNumber>
    </recommendedName>
    <alternativeName>
        <fullName evidence="1">Myotubularin-related protein 1</fullName>
    </alternativeName>
    <alternativeName>
        <fullName evidence="9">Phosphatidylinositol-3-phosphate phosphatase</fullName>
    </alternativeName>
</protein>